<sequence>MKRPDYRTLQALDAVIRERGFERAAQKLCITQSAVSQRIKQLENMFGQPLLVRTVPPRPTEQGQKLLALLRQVELLEEEWLGDEQTGSTPLLLSLAVNADSLATWLLPALAPVLADSPIRLNLQVEDETRTQERLRRGEVVGAVSIQHQALPSCLVDKLGALDYLFVSSKPFAEKYFPNGVTRSALLKAPVVAFDHLDDMHQAFLQQNFDLPPGSVPCHIVNSSEAFVQLARQGTTCCMIPHLQIEKELASGELIDLTPGLFQRRMLYWHRFAPESRMMRKVTDALLDYGHKVLRQD</sequence>
<reference key="1">
    <citation type="journal article" date="2008" name="J. Bacteriol.">
        <title>The complete genome sequence of Escherichia coli DH10B: insights into the biology of a laboratory workhorse.</title>
        <authorList>
            <person name="Durfee T."/>
            <person name="Nelson R."/>
            <person name="Baldwin S."/>
            <person name="Plunkett G. III"/>
            <person name="Burland V."/>
            <person name="Mau B."/>
            <person name="Petrosino J.F."/>
            <person name="Qin X."/>
            <person name="Muzny D.M."/>
            <person name="Ayele M."/>
            <person name="Gibbs R.A."/>
            <person name="Csorgo B."/>
            <person name="Posfai G."/>
            <person name="Weinstock G.M."/>
            <person name="Blattner F.R."/>
        </authorList>
    </citation>
    <scope>NUCLEOTIDE SEQUENCE [LARGE SCALE GENOMIC DNA]</scope>
    <source>
        <strain>K12 / DH10B</strain>
    </source>
</reference>
<dbReference type="EMBL" id="CP000948">
    <property type="protein sequence ID" value="ACB04017.1"/>
    <property type="molecule type" value="Genomic_DNA"/>
</dbReference>
<dbReference type="RefSeq" id="WP_000828351.1">
    <property type="nucleotide sequence ID" value="NC_010473.1"/>
</dbReference>
<dbReference type="SMR" id="B1XEK1"/>
<dbReference type="GeneID" id="93779084"/>
<dbReference type="KEGG" id="ecd:ECDH10B_3091"/>
<dbReference type="HOGENOM" id="CLU_063829_0_0_6"/>
<dbReference type="GO" id="GO:0003677">
    <property type="term" value="F:DNA binding"/>
    <property type="evidence" value="ECO:0007669"/>
    <property type="project" value="UniProtKB-UniRule"/>
</dbReference>
<dbReference type="GO" id="GO:0003700">
    <property type="term" value="F:DNA-binding transcription factor activity"/>
    <property type="evidence" value="ECO:0007669"/>
    <property type="project" value="UniProtKB-UniRule"/>
</dbReference>
<dbReference type="CDD" id="cd08428">
    <property type="entry name" value="PBP2_IciA_ArgP"/>
    <property type="match status" value="1"/>
</dbReference>
<dbReference type="FunFam" id="1.10.10.10:FF:000061">
    <property type="entry name" value="HTH-type transcriptional regulator ArgP"/>
    <property type="match status" value="1"/>
</dbReference>
<dbReference type="FunFam" id="3.40.190.290:FF:000002">
    <property type="entry name" value="HTH-type transcriptional regulator ArgP"/>
    <property type="match status" value="1"/>
</dbReference>
<dbReference type="Gene3D" id="3.40.190.290">
    <property type="match status" value="1"/>
</dbReference>
<dbReference type="Gene3D" id="1.10.10.10">
    <property type="entry name" value="Winged helix-like DNA-binding domain superfamily/Winged helix DNA-binding domain"/>
    <property type="match status" value="1"/>
</dbReference>
<dbReference type="HAMAP" id="MF_00513">
    <property type="entry name" value="HTH_type_ArgP"/>
    <property type="match status" value="1"/>
</dbReference>
<dbReference type="InterPro" id="IPR017685">
    <property type="entry name" value="ArgP"/>
</dbReference>
<dbReference type="InterPro" id="IPR023490">
    <property type="entry name" value="ArgP_gammaproteobact"/>
</dbReference>
<dbReference type="InterPro" id="IPR050176">
    <property type="entry name" value="LTTR"/>
</dbReference>
<dbReference type="InterPro" id="IPR005119">
    <property type="entry name" value="LysR_subst-bd"/>
</dbReference>
<dbReference type="InterPro" id="IPR000847">
    <property type="entry name" value="Tscrpt_reg_HTH_LysR"/>
</dbReference>
<dbReference type="InterPro" id="IPR036388">
    <property type="entry name" value="WH-like_DNA-bd_sf"/>
</dbReference>
<dbReference type="InterPro" id="IPR036390">
    <property type="entry name" value="WH_DNA-bd_sf"/>
</dbReference>
<dbReference type="NCBIfam" id="TIGR03298">
    <property type="entry name" value="argP"/>
    <property type="match status" value="1"/>
</dbReference>
<dbReference type="NCBIfam" id="NF002964">
    <property type="entry name" value="PRK03635.1"/>
    <property type="match status" value="1"/>
</dbReference>
<dbReference type="NCBIfam" id="NF009888">
    <property type="entry name" value="PRK13348.1"/>
    <property type="match status" value="1"/>
</dbReference>
<dbReference type="PANTHER" id="PTHR30579:SF2">
    <property type="entry name" value="HTH-TYPE TRANSCRIPTIONAL REGULATOR ARGP"/>
    <property type="match status" value="1"/>
</dbReference>
<dbReference type="PANTHER" id="PTHR30579">
    <property type="entry name" value="TRANSCRIPTIONAL REGULATOR"/>
    <property type="match status" value="1"/>
</dbReference>
<dbReference type="Pfam" id="PF00126">
    <property type="entry name" value="HTH_1"/>
    <property type="match status" value="1"/>
</dbReference>
<dbReference type="Pfam" id="PF03466">
    <property type="entry name" value="LysR_substrate"/>
    <property type="match status" value="1"/>
</dbReference>
<dbReference type="PRINTS" id="PR00039">
    <property type="entry name" value="HTHLYSR"/>
</dbReference>
<dbReference type="SUPFAM" id="SSF53850">
    <property type="entry name" value="Periplasmic binding protein-like II"/>
    <property type="match status" value="1"/>
</dbReference>
<dbReference type="SUPFAM" id="SSF46785">
    <property type="entry name" value="Winged helix' DNA-binding domain"/>
    <property type="match status" value="1"/>
</dbReference>
<dbReference type="PROSITE" id="PS50931">
    <property type="entry name" value="HTH_LYSR"/>
    <property type="match status" value="1"/>
</dbReference>
<accession>B1XEK1</accession>
<keyword id="KW-0238">DNA-binding</keyword>
<keyword id="KW-0804">Transcription</keyword>
<keyword id="KW-0805">Transcription regulation</keyword>
<evidence type="ECO:0000255" key="1">
    <source>
        <dbReference type="HAMAP-Rule" id="MF_00513"/>
    </source>
</evidence>
<evidence type="ECO:0000305" key="2"/>
<gene>
    <name evidence="1" type="primary">argP</name>
    <name type="synonym">iciA</name>
    <name type="ordered locus">ECDH10B_3091</name>
</gene>
<comment type="function">
    <text evidence="1">Controls the transcription of genes involved in arginine and lysine metabolism.</text>
</comment>
<comment type="subunit">
    <text evidence="1">Homodimer.</text>
</comment>
<comment type="similarity">
    <text evidence="2">Belongs to the LysR transcriptional regulatory family.</text>
</comment>
<proteinExistence type="inferred from homology"/>
<feature type="chain" id="PRO_1000127270" description="HTH-type transcriptional regulator ArgP">
    <location>
        <begin position="1"/>
        <end position="297"/>
    </location>
</feature>
<feature type="domain" description="HTH lysR-type" evidence="1">
    <location>
        <begin position="4"/>
        <end position="60"/>
    </location>
</feature>
<feature type="DNA-binding region" description="H-T-H motif" evidence="1">
    <location>
        <begin position="21"/>
        <end position="40"/>
    </location>
</feature>
<name>ARGP_ECODH</name>
<organism>
    <name type="scientific">Escherichia coli (strain K12 / DH10B)</name>
    <dbReference type="NCBI Taxonomy" id="316385"/>
    <lineage>
        <taxon>Bacteria</taxon>
        <taxon>Pseudomonadati</taxon>
        <taxon>Pseudomonadota</taxon>
        <taxon>Gammaproteobacteria</taxon>
        <taxon>Enterobacterales</taxon>
        <taxon>Enterobacteriaceae</taxon>
        <taxon>Escherichia</taxon>
    </lineage>
</organism>
<protein>
    <recommendedName>
        <fullName evidence="1">HTH-type transcriptional regulator ArgP</fullName>
    </recommendedName>
</protein>